<reference key="1">
    <citation type="journal article" date="2004" name="J. Mol. Evol.">
        <title>Comparative analysis of the complete plastid genome sequence of the red alga Gracilaria tenuistipitata var. liui provides insights into the evolution of rhodoplasts and their relationship to other plastids.</title>
        <authorList>
            <person name="Hagopian J.C."/>
            <person name="Reis M."/>
            <person name="Kitajima J.P."/>
            <person name="Bhattacharya D."/>
            <person name="de Oliveira M.C."/>
        </authorList>
    </citation>
    <scope>NUCLEOTIDE SEQUENCE [LARGE SCALE GENOMIC DNA]</scope>
</reference>
<gene>
    <name evidence="1" type="primary">rpl16</name>
    <name type="ordered locus">Grc000094</name>
</gene>
<name>RK16_GRATL</name>
<sequence>MLSPKRTKFRKQHRNRMNGKASKGNTIAFGEYALQTLEPVWLTARQIEATRRTITRYVKRGGKIWIRVFPDKPITARPAETRMGSGKGATEYWVAVIKPGHILFEIAGVSKQTAQEAMKLASYKLPIKTKFITKQ</sequence>
<accession>Q6B8W0</accession>
<evidence type="ECO:0000255" key="1">
    <source>
        <dbReference type="HAMAP-Rule" id="MF_01342"/>
    </source>
</evidence>
<evidence type="ECO:0000256" key="2">
    <source>
        <dbReference type="SAM" id="MobiDB-lite"/>
    </source>
</evidence>
<evidence type="ECO:0000305" key="3"/>
<dbReference type="EMBL" id="AY673996">
    <property type="protein sequence ID" value="AAT79675.1"/>
    <property type="molecule type" value="Genomic_DNA"/>
</dbReference>
<dbReference type="RefSeq" id="YP_063600.1">
    <property type="nucleotide sequence ID" value="NC_006137.1"/>
</dbReference>
<dbReference type="SMR" id="Q6B8W0"/>
<dbReference type="GeneID" id="2944002"/>
<dbReference type="GO" id="GO:0009507">
    <property type="term" value="C:chloroplast"/>
    <property type="evidence" value="ECO:0007669"/>
    <property type="project" value="UniProtKB-SubCell"/>
</dbReference>
<dbReference type="GO" id="GO:0005762">
    <property type="term" value="C:mitochondrial large ribosomal subunit"/>
    <property type="evidence" value="ECO:0007669"/>
    <property type="project" value="TreeGrafter"/>
</dbReference>
<dbReference type="GO" id="GO:0019843">
    <property type="term" value="F:rRNA binding"/>
    <property type="evidence" value="ECO:0007669"/>
    <property type="project" value="InterPro"/>
</dbReference>
<dbReference type="GO" id="GO:0003735">
    <property type="term" value="F:structural constituent of ribosome"/>
    <property type="evidence" value="ECO:0007669"/>
    <property type="project" value="InterPro"/>
</dbReference>
<dbReference type="GO" id="GO:0032543">
    <property type="term" value="P:mitochondrial translation"/>
    <property type="evidence" value="ECO:0007669"/>
    <property type="project" value="TreeGrafter"/>
</dbReference>
<dbReference type="CDD" id="cd01433">
    <property type="entry name" value="Ribosomal_L16_L10e"/>
    <property type="match status" value="1"/>
</dbReference>
<dbReference type="FunFam" id="3.90.1170.10:FF:000001">
    <property type="entry name" value="50S ribosomal protein L16"/>
    <property type="match status" value="1"/>
</dbReference>
<dbReference type="Gene3D" id="3.90.1170.10">
    <property type="entry name" value="Ribosomal protein L10e/L16"/>
    <property type="match status" value="1"/>
</dbReference>
<dbReference type="HAMAP" id="MF_01342">
    <property type="entry name" value="Ribosomal_uL16"/>
    <property type="match status" value="1"/>
</dbReference>
<dbReference type="InterPro" id="IPR047873">
    <property type="entry name" value="Ribosomal_uL16"/>
</dbReference>
<dbReference type="InterPro" id="IPR000114">
    <property type="entry name" value="Ribosomal_uL16_bact-type"/>
</dbReference>
<dbReference type="InterPro" id="IPR020798">
    <property type="entry name" value="Ribosomal_uL16_CS"/>
</dbReference>
<dbReference type="InterPro" id="IPR016180">
    <property type="entry name" value="Ribosomal_uL16_dom"/>
</dbReference>
<dbReference type="InterPro" id="IPR036920">
    <property type="entry name" value="Ribosomal_uL16_sf"/>
</dbReference>
<dbReference type="NCBIfam" id="TIGR01164">
    <property type="entry name" value="rplP_bact"/>
    <property type="match status" value="1"/>
</dbReference>
<dbReference type="PANTHER" id="PTHR12220">
    <property type="entry name" value="50S/60S RIBOSOMAL PROTEIN L16"/>
    <property type="match status" value="1"/>
</dbReference>
<dbReference type="PANTHER" id="PTHR12220:SF13">
    <property type="entry name" value="LARGE RIBOSOMAL SUBUNIT PROTEIN UL16M"/>
    <property type="match status" value="1"/>
</dbReference>
<dbReference type="Pfam" id="PF00252">
    <property type="entry name" value="Ribosomal_L16"/>
    <property type="match status" value="1"/>
</dbReference>
<dbReference type="PRINTS" id="PR00060">
    <property type="entry name" value="RIBOSOMALL16"/>
</dbReference>
<dbReference type="SUPFAM" id="SSF54686">
    <property type="entry name" value="Ribosomal protein L16p/L10e"/>
    <property type="match status" value="1"/>
</dbReference>
<dbReference type="PROSITE" id="PS00586">
    <property type="entry name" value="RIBOSOMAL_L16_1"/>
    <property type="match status" value="1"/>
</dbReference>
<dbReference type="PROSITE" id="PS00701">
    <property type="entry name" value="RIBOSOMAL_L16_2"/>
    <property type="match status" value="1"/>
</dbReference>
<proteinExistence type="inferred from homology"/>
<protein>
    <recommendedName>
        <fullName evidence="1">Large ribosomal subunit protein uL16c</fullName>
    </recommendedName>
    <alternativeName>
        <fullName evidence="3">50S ribosomal protein L16, chloroplastic</fullName>
    </alternativeName>
</protein>
<organism>
    <name type="scientific">Gracilaria tenuistipitata var. liui</name>
    <name type="common">Red alga</name>
    <dbReference type="NCBI Taxonomy" id="285951"/>
    <lineage>
        <taxon>Eukaryota</taxon>
        <taxon>Rhodophyta</taxon>
        <taxon>Florideophyceae</taxon>
        <taxon>Rhodymeniophycidae</taxon>
        <taxon>Gracilariales</taxon>
        <taxon>Gracilariaceae</taxon>
        <taxon>Gracilaria</taxon>
        <taxon>Gracilaria tenuistipitata</taxon>
    </lineage>
</organism>
<comment type="subunit">
    <text evidence="1">Part of the 50S ribosomal subunit.</text>
</comment>
<comment type="subcellular location">
    <subcellularLocation>
        <location>Plastid</location>
        <location>Chloroplast</location>
    </subcellularLocation>
</comment>
<comment type="similarity">
    <text evidence="1">Belongs to the universal ribosomal protein uL16 family.</text>
</comment>
<geneLocation type="chloroplast"/>
<feature type="chain" id="PRO_0000062284" description="Large ribosomal subunit protein uL16c">
    <location>
        <begin position="1"/>
        <end position="135"/>
    </location>
</feature>
<feature type="region of interest" description="Disordered" evidence="2">
    <location>
        <begin position="1"/>
        <end position="22"/>
    </location>
</feature>
<feature type="compositionally biased region" description="Basic residues" evidence="2">
    <location>
        <begin position="1"/>
        <end position="17"/>
    </location>
</feature>
<keyword id="KW-0150">Chloroplast</keyword>
<keyword id="KW-0934">Plastid</keyword>
<keyword id="KW-0687">Ribonucleoprotein</keyword>
<keyword id="KW-0689">Ribosomal protein</keyword>